<feature type="chain" id="PRO_0000174590" description="S-adenosylmethionine synthase">
    <location>
        <begin position="1"/>
        <end position="397"/>
    </location>
</feature>
<feature type="region of interest" description="Flexible loop" evidence="1">
    <location>
        <begin position="101"/>
        <end position="111"/>
    </location>
</feature>
<feature type="binding site" description="in other chain" evidence="1">
    <location>
        <position position="17"/>
    </location>
    <ligand>
        <name>ATP</name>
        <dbReference type="ChEBI" id="CHEBI:30616"/>
        <note>ligand shared between two neighboring subunits</note>
    </ligand>
</feature>
<feature type="binding site" evidence="1">
    <location>
        <position position="19"/>
    </location>
    <ligand>
        <name>Mg(2+)</name>
        <dbReference type="ChEBI" id="CHEBI:18420"/>
    </ligand>
</feature>
<feature type="binding site" evidence="1">
    <location>
        <position position="45"/>
    </location>
    <ligand>
        <name>K(+)</name>
        <dbReference type="ChEBI" id="CHEBI:29103"/>
    </ligand>
</feature>
<feature type="binding site" description="in other chain" evidence="1">
    <location>
        <position position="58"/>
    </location>
    <ligand>
        <name>L-methionine</name>
        <dbReference type="ChEBI" id="CHEBI:57844"/>
        <note>ligand shared between two neighboring subunits</note>
    </ligand>
</feature>
<feature type="binding site" description="in other chain" evidence="1">
    <location>
        <position position="101"/>
    </location>
    <ligand>
        <name>L-methionine</name>
        <dbReference type="ChEBI" id="CHEBI:57844"/>
        <note>ligand shared between two neighboring subunits</note>
    </ligand>
</feature>
<feature type="binding site" description="in other chain" evidence="1">
    <location>
        <begin position="176"/>
        <end position="178"/>
    </location>
    <ligand>
        <name>ATP</name>
        <dbReference type="ChEBI" id="CHEBI:30616"/>
        <note>ligand shared between two neighboring subunits</note>
    </ligand>
</feature>
<feature type="binding site" description="in other chain" evidence="1">
    <location>
        <begin position="243"/>
        <end position="244"/>
    </location>
    <ligand>
        <name>ATP</name>
        <dbReference type="ChEBI" id="CHEBI:30616"/>
        <note>ligand shared between two neighboring subunits</note>
    </ligand>
</feature>
<feature type="binding site" evidence="1">
    <location>
        <position position="252"/>
    </location>
    <ligand>
        <name>ATP</name>
        <dbReference type="ChEBI" id="CHEBI:30616"/>
        <note>ligand shared between two neighboring subunits</note>
    </ligand>
</feature>
<feature type="binding site" evidence="1">
    <location>
        <position position="252"/>
    </location>
    <ligand>
        <name>L-methionine</name>
        <dbReference type="ChEBI" id="CHEBI:57844"/>
        <note>ligand shared between two neighboring subunits</note>
    </ligand>
</feature>
<feature type="binding site" description="in other chain" evidence="1">
    <location>
        <begin position="258"/>
        <end position="259"/>
    </location>
    <ligand>
        <name>ATP</name>
        <dbReference type="ChEBI" id="CHEBI:30616"/>
        <note>ligand shared between two neighboring subunits</note>
    </ligand>
</feature>
<feature type="binding site" evidence="1">
    <location>
        <position position="279"/>
    </location>
    <ligand>
        <name>ATP</name>
        <dbReference type="ChEBI" id="CHEBI:30616"/>
        <note>ligand shared between two neighboring subunits</note>
    </ligand>
</feature>
<feature type="binding site" description="in other chain" evidence="1">
    <location>
        <position position="283"/>
    </location>
    <ligand>
        <name>L-methionine</name>
        <dbReference type="ChEBI" id="CHEBI:57844"/>
        <note>ligand shared between two neighboring subunits</note>
    </ligand>
</feature>
<keyword id="KW-0067">ATP-binding</keyword>
<keyword id="KW-0963">Cytoplasm</keyword>
<keyword id="KW-0460">Magnesium</keyword>
<keyword id="KW-0479">Metal-binding</keyword>
<keyword id="KW-0547">Nucleotide-binding</keyword>
<keyword id="KW-0554">One-carbon metabolism</keyword>
<keyword id="KW-0630">Potassium</keyword>
<keyword id="KW-0808">Transferase</keyword>
<reference key="1">
    <citation type="journal article" date="2004" name="Proc. Natl. Acad. Sci. U.S.A.">
        <title>Complete genomes of two clinical Staphylococcus aureus strains: evidence for the rapid evolution of virulence and drug resistance.</title>
        <authorList>
            <person name="Holden M.T.G."/>
            <person name="Feil E.J."/>
            <person name="Lindsay J.A."/>
            <person name="Peacock S.J."/>
            <person name="Day N.P.J."/>
            <person name="Enright M.C."/>
            <person name="Foster T.J."/>
            <person name="Moore C.E."/>
            <person name="Hurst L."/>
            <person name="Atkin R."/>
            <person name="Barron A."/>
            <person name="Bason N."/>
            <person name="Bentley S.D."/>
            <person name="Chillingworth C."/>
            <person name="Chillingworth T."/>
            <person name="Churcher C."/>
            <person name="Clark L."/>
            <person name="Corton C."/>
            <person name="Cronin A."/>
            <person name="Doggett J."/>
            <person name="Dowd L."/>
            <person name="Feltwell T."/>
            <person name="Hance Z."/>
            <person name="Harris B."/>
            <person name="Hauser H."/>
            <person name="Holroyd S."/>
            <person name="Jagels K."/>
            <person name="James K.D."/>
            <person name="Lennard N."/>
            <person name="Line A."/>
            <person name="Mayes R."/>
            <person name="Moule S."/>
            <person name="Mungall K."/>
            <person name="Ormond D."/>
            <person name="Quail M.A."/>
            <person name="Rabbinowitsch E."/>
            <person name="Rutherford K.M."/>
            <person name="Sanders M."/>
            <person name="Sharp S."/>
            <person name="Simmonds M."/>
            <person name="Stevens K."/>
            <person name="Whitehead S."/>
            <person name="Barrell B.G."/>
            <person name="Spratt B.G."/>
            <person name="Parkhill J."/>
        </authorList>
    </citation>
    <scope>NUCLEOTIDE SEQUENCE [LARGE SCALE GENOMIC DNA]</scope>
    <source>
        <strain>MSSA476</strain>
    </source>
</reference>
<gene>
    <name evidence="1" type="primary">metK</name>
    <name type="ordered locus">SAS1711</name>
</gene>
<proteinExistence type="inferred from homology"/>
<organism>
    <name type="scientific">Staphylococcus aureus (strain MSSA476)</name>
    <dbReference type="NCBI Taxonomy" id="282459"/>
    <lineage>
        <taxon>Bacteria</taxon>
        <taxon>Bacillati</taxon>
        <taxon>Bacillota</taxon>
        <taxon>Bacilli</taxon>
        <taxon>Bacillales</taxon>
        <taxon>Staphylococcaceae</taxon>
        <taxon>Staphylococcus</taxon>
    </lineage>
</organism>
<dbReference type="EC" id="2.5.1.6" evidence="1"/>
<dbReference type="EMBL" id="BX571857">
    <property type="protein sequence ID" value="CAG43514.1"/>
    <property type="molecule type" value="Genomic_DNA"/>
</dbReference>
<dbReference type="RefSeq" id="WP_000933822.1">
    <property type="nucleotide sequence ID" value="NC_002953.3"/>
</dbReference>
<dbReference type="SMR" id="Q6G8E3"/>
<dbReference type="KEGG" id="sas:SAS1711"/>
<dbReference type="HOGENOM" id="CLU_041802_1_1_9"/>
<dbReference type="UniPathway" id="UPA00315">
    <property type="reaction ID" value="UER00080"/>
</dbReference>
<dbReference type="GO" id="GO:0005737">
    <property type="term" value="C:cytoplasm"/>
    <property type="evidence" value="ECO:0007669"/>
    <property type="project" value="UniProtKB-SubCell"/>
</dbReference>
<dbReference type="GO" id="GO:0005524">
    <property type="term" value="F:ATP binding"/>
    <property type="evidence" value="ECO:0007669"/>
    <property type="project" value="UniProtKB-UniRule"/>
</dbReference>
<dbReference type="GO" id="GO:0000287">
    <property type="term" value="F:magnesium ion binding"/>
    <property type="evidence" value="ECO:0007669"/>
    <property type="project" value="UniProtKB-UniRule"/>
</dbReference>
<dbReference type="GO" id="GO:0004478">
    <property type="term" value="F:methionine adenosyltransferase activity"/>
    <property type="evidence" value="ECO:0007669"/>
    <property type="project" value="UniProtKB-UniRule"/>
</dbReference>
<dbReference type="GO" id="GO:0006730">
    <property type="term" value="P:one-carbon metabolic process"/>
    <property type="evidence" value="ECO:0007669"/>
    <property type="project" value="UniProtKB-KW"/>
</dbReference>
<dbReference type="GO" id="GO:0006556">
    <property type="term" value="P:S-adenosylmethionine biosynthetic process"/>
    <property type="evidence" value="ECO:0007669"/>
    <property type="project" value="UniProtKB-UniRule"/>
</dbReference>
<dbReference type="CDD" id="cd18079">
    <property type="entry name" value="S-AdoMet_synt"/>
    <property type="match status" value="1"/>
</dbReference>
<dbReference type="FunFam" id="3.30.300.10:FF:000003">
    <property type="entry name" value="S-adenosylmethionine synthase"/>
    <property type="match status" value="1"/>
</dbReference>
<dbReference type="FunFam" id="3.30.300.10:FF:000004">
    <property type="entry name" value="S-adenosylmethionine synthase"/>
    <property type="match status" value="1"/>
</dbReference>
<dbReference type="Gene3D" id="3.30.300.10">
    <property type="match status" value="3"/>
</dbReference>
<dbReference type="HAMAP" id="MF_00086">
    <property type="entry name" value="S_AdoMet_synth1"/>
    <property type="match status" value="1"/>
</dbReference>
<dbReference type="InterPro" id="IPR022631">
    <property type="entry name" value="ADOMET_SYNTHASE_CS"/>
</dbReference>
<dbReference type="InterPro" id="IPR022630">
    <property type="entry name" value="S-AdoMet_synt_C"/>
</dbReference>
<dbReference type="InterPro" id="IPR022629">
    <property type="entry name" value="S-AdoMet_synt_central"/>
</dbReference>
<dbReference type="InterPro" id="IPR022628">
    <property type="entry name" value="S-AdoMet_synt_N"/>
</dbReference>
<dbReference type="InterPro" id="IPR002133">
    <property type="entry name" value="S-AdoMet_synthetase"/>
</dbReference>
<dbReference type="InterPro" id="IPR022636">
    <property type="entry name" value="S-AdoMet_synthetase_sfam"/>
</dbReference>
<dbReference type="NCBIfam" id="TIGR01034">
    <property type="entry name" value="metK"/>
    <property type="match status" value="1"/>
</dbReference>
<dbReference type="PANTHER" id="PTHR11964">
    <property type="entry name" value="S-ADENOSYLMETHIONINE SYNTHETASE"/>
    <property type="match status" value="1"/>
</dbReference>
<dbReference type="Pfam" id="PF02773">
    <property type="entry name" value="S-AdoMet_synt_C"/>
    <property type="match status" value="1"/>
</dbReference>
<dbReference type="Pfam" id="PF02772">
    <property type="entry name" value="S-AdoMet_synt_M"/>
    <property type="match status" value="1"/>
</dbReference>
<dbReference type="Pfam" id="PF00438">
    <property type="entry name" value="S-AdoMet_synt_N"/>
    <property type="match status" value="1"/>
</dbReference>
<dbReference type="PIRSF" id="PIRSF000497">
    <property type="entry name" value="MAT"/>
    <property type="match status" value="1"/>
</dbReference>
<dbReference type="SUPFAM" id="SSF55973">
    <property type="entry name" value="S-adenosylmethionine synthetase"/>
    <property type="match status" value="3"/>
</dbReference>
<dbReference type="PROSITE" id="PS00376">
    <property type="entry name" value="ADOMET_SYNTHASE_1"/>
    <property type="match status" value="1"/>
</dbReference>
<dbReference type="PROSITE" id="PS00377">
    <property type="entry name" value="ADOMET_SYNTHASE_2"/>
    <property type="match status" value="1"/>
</dbReference>
<name>METK_STAAS</name>
<comment type="function">
    <text evidence="1">Catalyzes the formation of S-adenosylmethionine (AdoMet) from methionine and ATP. The overall synthetic reaction is composed of two sequential steps, AdoMet formation and the subsequent tripolyphosphate hydrolysis which occurs prior to release of AdoMet from the enzyme.</text>
</comment>
<comment type="catalytic activity">
    <reaction evidence="1">
        <text>L-methionine + ATP + H2O = S-adenosyl-L-methionine + phosphate + diphosphate</text>
        <dbReference type="Rhea" id="RHEA:21080"/>
        <dbReference type="ChEBI" id="CHEBI:15377"/>
        <dbReference type="ChEBI" id="CHEBI:30616"/>
        <dbReference type="ChEBI" id="CHEBI:33019"/>
        <dbReference type="ChEBI" id="CHEBI:43474"/>
        <dbReference type="ChEBI" id="CHEBI:57844"/>
        <dbReference type="ChEBI" id="CHEBI:59789"/>
        <dbReference type="EC" id="2.5.1.6"/>
    </reaction>
</comment>
<comment type="cofactor">
    <cofactor evidence="1">
        <name>Mg(2+)</name>
        <dbReference type="ChEBI" id="CHEBI:18420"/>
    </cofactor>
    <text evidence="1">Binds 2 divalent ions per subunit.</text>
</comment>
<comment type="cofactor">
    <cofactor evidence="1">
        <name>K(+)</name>
        <dbReference type="ChEBI" id="CHEBI:29103"/>
    </cofactor>
    <text evidence="1">Binds 1 potassium ion per subunit.</text>
</comment>
<comment type="pathway">
    <text evidence="1">Amino-acid biosynthesis; S-adenosyl-L-methionine biosynthesis; S-adenosyl-L-methionine from L-methionine: step 1/1.</text>
</comment>
<comment type="subunit">
    <text evidence="1">Homotetramer; dimer of dimers.</text>
</comment>
<comment type="subcellular location">
    <subcellularLocation>
        <location evidence="1">Cytoplasm</location>
    </subcellularLocation>
</comment>
<comment type="similarity">
    <text evidence="1">Belongs to the AdoMet synthase family.</text>
</comment>
<protein>
    <recommendedName>
        <fullName evidence="1">S-adenosylmethionine synthase</fullName>
        <shortName evidence="1">AdoMet synthase</shortName>
        <ecNumber evidence="1">2.5.1.6</ecNumber>
    </recommendedName>
    <alternativeName>
        <fullName evidence="1">MAT</fullName>
    </alternativeName>
    <alternativeName>
        <fullName evidence="1">Methionine adenosyltransferase</fullName>
    </alternativeName>
</protein>
<sequence length="397" mass="43641">MLNNKRLFTSESVTEGHPDKIADQVSDAILDAILKDDPNARVACETTVTTGMALIAGEISTTTYVDIPKVVRETIKEIGYTRAKYGYDYETMAILTAIDEQSPDIAQGVDKALEYRDKDSEEEIEATGAGDQGLMFGYATNETETYMPLAIYLSHQLAKRLSDVRKDGTLNYLRPDGKVQVTVEYDENDNPVRIDTIVVSTQHAEDVTLEQIQEDIKAHVIYPTVPENLINEQTKFYINPTGRFVIGGPQGDAGLTGRKIIVDTYGGYARHGGGCFSGKDPTKVDRSAAYAARYVAKNIVAAGLADQCEVQLAYAIGVAEPVSIAIDTFGTGKVSEGQLVEAVRKHFDLRPAGIIKMLDLKQPIYKQTAAYGHFGRTDVLFPWEKLDKVEELKDAVK</sequence>
<accession>Q6G8E3</accession>
<evidence type="ECO:0000255" key="1">
    <source>
        <dbReference type="HAMAP-Rule" id="MF_00086"/>
    </source>
</evidence>